<comment type="function">
    <text evidence="1">Catalyzes the attachment of glutamate to tRNA(Glu) in a two-step reaction: glutamate is first activated by ATP to form Glu-AMP and then transferred to the acceptor end of tRNA(Glu).</text>
</comment>
<comment type="catalytic activity">
    <reaction evidence="1">
        <text>tRNA(Glu) + L-glutamate + ATP = L-glutamyl-tRNA(Glu) + AMP + diphosphate</text>
        <dbReference type="Rhea" id="RHEA:23540"/>
        <dbReference type="Rhea" id="RHEA-COMP:9663"/>
        <dbReference type="Rhea" id="RHEA-COMP:9680"/>
        <dbReference type="ChEBI" id="CHEBI:29985"/>
        <dbReference type="ChEBI" id="CHEBI:30616"/>
        <dbReference type="ChEBI" id="CHEBI:33019"/>
        <dbReference type="ChEBI" id="CHEBI:78442"/>
        <dbReference type="ChEBI" id="CHEBI:78520"/>
        <dbReference type="ChEBI" id="CHEBI:456215"/>
        <dbReference type="EC" id="6.1.1.17"/>
    </reaction>
</comment>
<comment type="subunit">
    <text evidence="1">Monomer.</text>
</comment>
<comment type="subcellular location">
    <subcellularLocation>
        <location evidence="1">Cytoplasm</location>
    </subcellularLocation>
</comment>
<comment type="similarity">
    <text evidence="1">Belongs to the class-I aminoacyl-tRNA synthetase family. Glutamate--tRNA ligase type 1 subfamily.</text>
</comment>
<dbReference type="EC" id="6.1.1.17" evidence="1"/>
<dbReference type="EMBL" id="CP000414">
    <property type="protein sequence ID" value="ABJ61311.1"/>
    <property type="molecule type" value="Genomic_DNA"/>
</dbReference>
<dbReference type="RefSeq" id="WP_011679119.1">
    <property type="nucleotide sequence ID" value="NC_008531.1"/>
</dbReference>
<dbReference type="SMR" id="Q03ZR1"/>
<dbReference type="EnsemblBacteria" id="ABJ61311">
    <property type="protein sequence ID" value="ABJ61311"/>
    <property type="gene ID" value="LEUM_0161"/>
</dbReference>
<dbReference type="GeneID" id="29577456"/>
<dbReference type="KEGG" id="lme:LEUM_0161"/>
<dbReference type="eggNOG" id="COG0008">
    <property type="taxonomic scope" value="Bacteria"/>
</dbReference>
<dbReference type="HOGENOM" id="CLU_015768_6_1_9"/>
<dbReference type="Proteomes" id="UP000000362">
    <property type="component" value="Chromosome"/>
</dbReference>
<dbReference type="GO" id="GO:0005829">
    <property type="term" value="C:cytosol"/>
    <property type="evidence" value="ECO:0007669"/>
    <property type="project" value="TreeGrafter"/>
</dbReference>
<dbReference type="GO" id="GO:0005524">
    <property type="term" value="F:ATP binding"/>
    <property type="evidence" value="ECO:0007669"/>
    <property type="project" value="UniProtKB-UniRule"/>
</dbReference>
<dbReference type="GO" id="GO:0004818">
    <property type="term" value="F:glutamate-tRNA ligase activity"/>
    <property type="evidence" value="ECO:0007669"/>
    <property type="project" value="UniProtKB-UniRule"/>
</dbReference>
<dbReference type="GO" id="GO:0000049">
    <property type="term" value="F:tRNA binding"/>
    <property type="evidence" value="ECO:0007669"/>
    <property type="project" value="InterPro"/>
</dbReference>
<dbReference type="GO" id="GO:0008270">
    <property type="term" value="F:zinc ion binding"/>
    <property type="evidence" value="ECO:0007669"/>
    <property type="project" value="InterPro"/>
</dbReference>
<dbReference type="GO" id="GO:0006424">
    <property type="term" value="P:glutamyl-tRNA aminoacylation"/>
    <property type="evidence" value="ECO:0007669"/>
    <property type="project" value="UniProtKB-UniRule"/>
</dbReference>
<dbReference type="CDD" id="cd00808">
    <property type="entry name" value="GluRS_core"/>
    <property type="match status" value="1"/>
</dbReference>
<dbReference type="FunFam" id="3.40.50.620:FF:000007">
    <property type="entry name" value="Glutamate--tRNA ligase"/>
    <property type="match status" value="1"/>
</dbReference>
<dbReference type="Gene3D" id="1.10.10.350">
    <property type="match status" value="1"/>
</dbReference>
<dbReference type="Gene3D" id="3.40.50.620">
    <property type="entry name" value="HUPs"/>
    <property type="match status" value="1"/>
</dbReference>
<dbReference type="HAMAP" id="MF_00022">
    <property type="entry name" value="Glu_tRNA_synth_type1"/>
    <property type="match status" value="1"/>
</dbReference>
<dbReference type="InterPro" id="IPR045462">
    <property type="entry name" value="aa-tRNA-synth_I_cd-bd"/>
</dbReference>
<dbReference type="InterPro" id="IPR020751">
    <property type="entry name" value="aa-tRNA-synth_I_codon-bd_sub2"/>
</dbReference>
<dbReference type="InterPro" id="IPR001412">
    <property type="entry name" value="aa-tRNA-synth_I_CS"/>
</dbReference>
<dbReference type="InterPro" id="IPR008925">
    <property type="entry name" value="aa_tRNA-synth_I_cd-bd_sf"/>
</dbReference>
<dbReference type="InterPro" id="IPR004527">
    <property type="entry name" value="Glu-tRNA-ligase_bac/mito"/>
</dbReference>
<dbReference type="InterPro" id="IPR000924">
    <property type="entry name" value="Glu/Gln-tRNA-synth"/>
</dbReference>
<dbReference type="InterPro" id="IPR020058">
    <property type="entry name" value="Glu/Gln-tRNA-synth_Ib_cat-dom"/>
</dbReference>
<dbReference type="InterPro" id="IPR049940">
    <property type="entry name" value="GluQ/Sye"/>
</dbReference>
<dbReference type="InterPro" id="IPR033910">
    <property type="entry name" value="GluRS_core"/>
</dbReference>
<dbReference type="InterPro" id="IPR014729">
    <property type="entry name" value="Rossmann-like_a/b/a_fold"/>
</dbReference>
<dbReference type="NCBIfam" id="TIGR00464">
    <property type="entry name" value="gltX_bact"/>
    <property type="match status" value="1"/>
</dbReference>
<dbReference type="PANTHER" id="PTHR43311">
    <property type="entry name" value="GLUTAMATE--TRNA LIGASE"/>
    <property type="match status" value="1"/>
</dbReference>
<dbReference type="PANTHER" id="PTHR43311:SF2">
    <property type="entry name" value="GLUTAMATE--TRNA LIGASE, MITOCHONDRIAL-RELATED"/>
    <property type="match status" value="1"/>
</dbReference>
<dbReference type="Pfam" id="PF19269">
    <property type="entry name" value="Anticodon_2"/>
    <property type="match status" value="1"/>
</dbReference>
<dbReference type="Pfam" id="PF00749">
    <property type="entry name" value="tRNA-synt_1c"/>
    <property type="match status" value="1"/>
</dbReference>
<dbReference type="PRINTS" id="PR00987">
    <property type="entry name" value="TRNASYNTHGLU"/>
</dbReference>
<dbReference type="SUPFAM" id="SSF48163">
    <property type="entry name" value="An anticodon-binding domain of class I aminoacyl-tRNA synthetases"/>
    <property type="match status" value="1"/>
</dbReference>
<dbReference type="SUPFAM" id="SSF52374">
    <property type="entry name" value="Nucleotidylyl transferase"/>
    <property type="match status" value="1"/>
</dbReference>
<dbReference type="PROSITE" id="PS00178">
    <property type="entry name" value="AA_TRNA_LIGASE_I"/>
    <property type="match status" value="1"/>
</dbReference>
<evidence type="ECO:0000255" key="1">
    <source>
        <dbReference type="HAMAP-Rule" id="MF_00022"/>
    </source>
</evidence>
<organism>
    <name type="scientific">Leuconostoc mesenteroides subsp. mesenteroides (strain ATCC 8293 / DSM 20343 / BCRC 11652 / CCM 1803 / JCM 6124 / NCDO 523 / NBRC 100496 / NCIMB 8023 / NCTC 12954 / NRRL B-1118 / 37Y)</name>
    <dbReference type="NCBI Taxonomy" id="203120"/>
    <lineage>
        <taxon>Bacteria</taxon>
        <taxon>Bacillati</taxon>
        <taxon>Bacillota</taxon>
        <taxon>Bacilli</taxon>
        <taxon>Lactobacillales</taxon>
        <taxon>Lactobacillaceae</taxon>
        <taxon>Leuconostoc</taxon>
    </lineage>
</organism>
<reference key="1">
    <citation type="journal article" date="2006" name="Proc. Natl. Acad. Sci. U.S.A.">
        <title>Comparative genomics of the lactic acid bacteria.</title>
        <authorList>
            <person name="Makarova K.S."/>
            <person name="Slesarev A."/>
            <person name="Wolf Y.I."/>
            <person name="Sorokin A."/>
            <person name="Mirkin B."/>
            <person name="Koonin E.V."/>
            <person name="Pavlov A."/>
            <person name="Pavlova N."/>
            <person name="Karamychev V."/>
            <person name="Polouchine N."/>
            <person name="Shakhova V."/>
            <person name="Grigoriev I."/>
            <person name="Lou Y."/>
            <person name="Rohksar D."/>
            <person name="Lucas S."/>
            <person name="Huang K."/>
            <person name="Goodstein D.M."/>
            <person name="Hawkins T."/>
            <person name="Plengvidhya V."/>
            <person name="Welker D."/>
            <person name="Hughes J."/>
            <person name="Goh Y."/>
            <person name="Benson A."/>
            <person name="Baldwin K."/>
            <person name="Lee J.-H."/>
            <person name="Diaz-Muniz I."/>
            <person name="Dosti B."/>
            <person name="Smeianov V."/>
            <person name="Wechter W."/>
            <person name="Barabote R."/>
            <person name="Lorca G."/>
            <person name="Altermann E."/>
            <person name="Barrangou R."/>
            <person name="Ganesan B."/>
            <person name="Xie Y."/>
            <person name="Rawsthorne H."/>
            <person name="Tamir D."/>
            <person name="Parker C."/>
            <person name="Breidt F."/>
            <person name="Broadbent J.R."/>
            <person name="Hutkins R."/>
            <person name="O'Sullivan D."/>
            <person name="Steele J."/>
            <person name="Unlu G."/>
            <person name="Saier M.H. Jr."/>
            <person name="Klaenhammer T."/>
            <person name="Richardson P."/>
            <person name="Kozyavkin S."/>
            <person name="Weimer B.C."/>
            <person name="Mills D.A."/>
        </authorList>
    </citation>
    <scope>NUCLEOTIDE SEQUENCE [LARGE SCALE GENOMIC DNA]</scope>
    <source>
        <strain>ATCC 8293 / DSM 20343 / BCRC 11652 / CCM 1803 / JCM 6124 / NCDO 523 / NBRC 100496 / NCIMB 8023 / NCTC 12954 / NRRL B-1118 / 37Y</strain>
    </source>
</reference>
<name>SYE_LEUMM</name>
<feature type="chain" id="PRO_0000367702" description="Glutamate--tRNA ligase">
    <location>
        <begin position="1"/>
        <end position="498"/>
    </location>
</feature>
<feature type="short sequence motif" description="'HIGH' region" evidence="1">
    <location>
        <begin position="11"/>
        <end position="21"/>
    </location>
</feature>
<feature type="short sequence motif" description="'KMSKS' region" evidence="1">
    <location>
        <begin position="260"/>
        <end position="264"/>
    </location>
</feature>
<feature type="binding site" evidence="1">
    <location>
        <position position="263"/>
    </location>
    <ligand>
        <name>ATP</name>
        <dbReference type="ChEBI" id="CHEBI:30616"/>
    </ligand>
</feature>
<proteinExistence type="inferred from homology"/>
<accession>Q03ZR1</accession>
<protein>
    <recommendedName>
        <fullName evidence="1">Glutamate--tRNA ligase</fullName>
        <ecNumber evidence="1">6.1.1.17</ecNumber>
    </recommendedName>
    <alternativeName>
        <fullName evidence="1">Glutamyl-tRNA synthetase</fullName>
        <shortName evidence="1">GluRS</shortName>
    </alternativeName>
</protein>
<keyword id="KW-0030">Aminoacyl-tRNA synthetase</keyword>
<keyword id="KW-0067">ATP-binding</keyword>
<keyword id="KW-0963">Cytoplasm</keyword>
<keyword id="KW-0436">Ligase</keyword>
<keyword id="KW-0547">Nucleotide-binding</keyword>
<keyword id="KW-0648">Protein biosynthesis</keyword>
<keyword id="KW-1185">Reference proteome</keyword>
<gene>
    <name evidence="1" type="primary">gltX</name>
    <name type="ordered locus">LEUM_0161</name>
</gene>
<sequence>MTEDIRVRYAPSPTGHLHIGNARTAIFNWLFARHYNGTFVIRIEDTDSARNIADGEKSQLENLAWLGLDWDESPDKPGVYGPYRQSERNEQGIYQEFIDALLASGQAYKSYKTSGQLASEREAQQAAKQAPHYVYEYEGLTNEEREAKYAEFEAQGLKPVVRFRVPEEQVYAWDDIVKGHIEIGAKEVGGDWVIQKADGMPTYNFAVVVDDHLMKISHVLRGDDHVSNTPKQIMIYEALGWDVPKFGHMALIINGETGKKLSKRDENLLQFVEQYKELGYQPQAMVNFIGLLGWSPKGEDEIFSLSEFKEMFDEKRLSKANAKFDQKKLEWVNNQWMRRDTDAVMPQLIQELVNAHLISADDAADKKKWLSEVIKVAGVDGISYTRQIVELVRKPFFELGDITDEMVEYLTSEDGRKVAAAWESTYESLPTDATPADYMSTIRAIQNDLEIKGRNLWNPIRIMTTHEVQGPNLPEMLTLLDKNTVLKTMRDVKEKYLA</sequence>